<accession>A9VHU6</accession>
<feature type="chain" id="PRO_1000092372" description="Elongation factor 4">
    <location>
        <begin position="1"/>
        <end position="607"/>
    </location>
</feature>
<feature type="domain" description="tr-type G">
    <location>
        <begin position="11"/>
        <end position="193"/>
    </location>
</feature>
<feature type="binding site" evidence="1">
    <location>
        <begin position="23"/>
        <end position="28"/>
    </location>
    <ligand>
        <name>GTP</name>
        <dbReference type="ChEBI" id="CHEBI:37565"/>
    </ligand>
</feature>
<feature type="binding site" evidence="1">
    <location>
        <begin position="140"/>
        <end position="143"/>
    </location>
    <ligand>
        <name>GTP</name>
        <dbReference type="ChEBI" id="CHEBI:37565"/>
    </ligand>
</feature>
<dbReference type="EC" id="3.6.5.n1" evidence="1"/>
<dbReference type="EMBL" id="CP000903">
    <property type="protein sequence ID" value="ABY45331.1"/>
    <property type="molecule type" value="Genomic_DNA"/>
</dbReference>
<dbReference type="RefSeq" id="WP_002034072.1">
    <property type="nucleotide sequence ID" value="NC_010184.1"/>
</dbReference>
<dbReference type="SMR" id="A9VHU6"/>
<dbReference type="GeneID" id="66266106"/>
<dbReference type="KEGG" id="bwe:BcerKBAB4_4170"/>
<dbReference type="eggNOG" id="COG0481">
    <property type="taxonomic scope" value="Bacteria"/>
</dbReference>
<dbReference type="HOGENOM" id="CLU_009995_3_3_9"/>
<dbReference type="Proteomes" id="UP000002154">
    <property type="component" value="Chromosome"/>
</dbReference>
<dbReference type="GO" id="GO:0005886">
    <property type="term" value="C:plasma membrane"/>
    <property type="evidence" value="ECO:0007669"/>
    <property type="project" value="UniProtKB-SubCell"/>
</dbReference>
<dbReference type="GO" id="GO:0005525">
    <property type="term" value="F:GTP binding"/>
    <property type="evidence" value="ECO:0007669"/>
    <property type="project" value="UniProtKB-UniRule"/>
</dbReference>
<dbReference type="GO" id="GO:0003924">
    <property type="term" value="F:GTPase activity"/>
    <property type="evidence" value="ECO:0007669"/>
    <property type="project" value="UniProtKB-UniRule"/>
</dbReference>
<dbReference type="GO" id="GO:0043022">
    <property type="term" value="F:ribosome binding"/>
    <property type="evidence" value="ECO:0007669"/>
    <property type="project" value="UniProtKB-UniRule"/>
</dbReference>
<dbReference type="GO" id="GO:0003746">
    <property type="term" value="F:translation elongation factor activity"/>
    <property type="evidence" value="ECO:0007669"/>
    <property type="project" value="UniProtKB-UniRule"/>
</dbReference>
<dbReference type="GO" id="GO:0045727">
    <property type="term" value="P:positive regulation of translation"/>
    <property type="evidence" value="ECO:0007669"/>
    <property type="project" value="UniProtKB-UniRule"/>
</dbReference>
<dbReference type="CDD" id="cd03699">
    <property type="entry name" value="EF4_II"/>
    <property type="match status" value="1"/>
</dbReference>
<dbReference type="CDD" id="cd16260">
    <property type="entry name" value="EF4_III"/>
    <property type="match status" value="1"/>
</dbReference>
<dbReference type="CDD" id="cd01890">
    <property type="entry name" value="LepA"/>
    <property type="match status" value="1"/>
</dbReference>
<dbReference type="CDD" id="cd03709">
    <property type="entry name" value="lepA_C"/>
    <property type="match status" value="1"/>
</dbReference>
<dbReference type="FunFam" id="3.40.50.300:FF:000078">
    <property type="entry name" value="Elongation factor 4"/>
    <property type="match status" value="1"/>
</dbReference>
<dbReference type="FunFam" id="2.40.30.10:FF:000015">
    <property type="entry name" value="Translation factor GUF1, mitochondrial"/>
    <property type="match status" value="1"/>
</dbReference>
<dbReference type="FunFam" id="3.30.70.240:FF:000007">
    <property type="entry name" value="Translation factor GUF1, mitochondrial"/>
    <property type="match status" value="1"/>
</dbReference>
<dbReference type="FunFam" id="3.30.70.2570:FF:000001">
    <property type="entry name" value="Translation factor GUF1, mitochondrial"/>
    <property type="match status" value="1"/>
</dbReference>
<dbReference type="FunFam" id="3.30.70.870:FF:000004">
    <property type="entry name" value="Translation factor GUF1, mitochondrial"/>
    <property type="match status" value="1"/>
</dbReference>
<dbReference type="Gene3D" id="3.30.70.240">
    <property type="match status" value="1"/>
</dbReference>
<dbReference type="Gene3D" id="3.30.70.2570">
    <property type="entry name" value="Elongation factor 4, C-terminal domain"/>
    <property type="match status" value="1"/>
</dbReference>
<dbReference type="Gene3D" id="3.30.70.870">
    <property type="entry name" value="Elongation Factor G (Translational Gtpase), domain 3"/>
    <property type="match status" value="1"/>
</dbReference>
<dbReference type="Gene3D" id="3.40.50.300">
    <property type="entry name" value="P-loop containing nucleotide triphosphate hydrolases"/>
    <property type="match status" value="1"/>
</dbReference>
<dbReference type="Gene3D" id="2.40.30.10">
    <property type="entry name" value="Translation factors"/>
    <property type="match status" value="1"/>
</dbReference>
<dbReference type="HAMAP" id="MF_00071">
    <property type="entry name" value="LepA"/>
    <property type="match status" value="1"/>
</dbReference>
<dbReference type="InterPro" id="IPR006297">
    <property type="entry name" value="EF-4"/>
</dbReference>
<dbReference type="InterPro" id="IPR035647">
    <property type="entry name" value="EFG_III/V"/>
</dbReference>
<dbReference type="InterPro" id="IPR000640">
    <property type="entry name" value="EFG_V-like"/>
</dbReference>
<dbReference type="InterPro" id="IPR004161">
    <property type="entry name" value="EFTu-like_2"/>
</dbReference>
<dbReference type="InterPro" id="IPR031157">
    <property type="entry name" value="G_TR_CS"/>
</dbReference>
<dbReference type="InterPro" id="IPR038363">
    <property type="entry name" value="LepA_C_sf"/>
</dbReference>
<dbReference type="InterPro" id="IPR013842">
    <property type="entry name" value="LepA_CTD"/>
</dbReference>
<dbReference type="InterPro" id="IPR035654">
    <property type="entry name" value="LepA_IV"/>
</dbReference>
<dbReference type="InterPro" id="IPR027417">
    <property type="entry name" value="P-loop_NTPase"/>
</dbReference>
<dbReference type="InterPro" id="IPR005225">
    <property type="entry name" value="Small_GTP-bd"/>
</dbReference>
<dbReference type="InterPro" id="IPR000795">
    <property type="entry name" value="T_Tr_GTP-bd_dom"/>
</dbReference>
<dbReference type="NCBIfam" id="TIGR01393">
    <property type="entry name" value="lepA"/>
    <property type="match status" value="1"/>
</dbReference>
<dbReference type="NCBIfam" id="TIGR00231">
    <property type="entry name" value="small_GTP"/>
    <property type="match status" value="1"/>
</dbReference>
<dbReference type="PANTHER" id="PTHR43512:SF4">
    <property type="entry name" value="TRANSLATION FACTOR GUF1 HOMOLOG, CHLOROPLASTIC"/>
    <property type="match status" value="1"/>
</dbReference>
<dbReference type="PANTHER" id="PTHR43512">
    <property type="entry name" value="TRANSLATION FACTOR GUF1-RELATED"/>
    <property type="match status" value="1"/>
</dbReference>
<dbReference type="Pfam" id="PF00679">
    <property type="entry name" value="EFG_C"/>
    <property type="match status" value="1"/>
</dbReference>
<dbReference type="Pfam" id="PF00009">
    <property type="entry name" value="GTP_EFTU"/>
    <property type="match status" value="1"/>
</dbReference>
<dbReference type="Pfam" id="PF03144">
    <property type="entry name" value="GTP_EFTU_D2"/>
    <property type="match status" value="1"/>
</dbReference>
<dbReference type="Pfam" id="PF06421">
    <property type="entry name" value="LepA_C"/>
    <property type="match status" value="1"/>
</dbReference>
<dbReference type="PRINTS" id="PR00315">
    <property type="entry name" value="ELONGATNFCT"/>
</dbReference>
<dbReference type="SMART" id="SM00838">
    <property type="entry name" value="EFG_C"/>
    <property type="match status" value="1"/>
</dbReference>
<dbReference type="SUPFAM" id="SSF54980">
    <property type="entry name" value="EF-G C-terminal domain-like"/>
    <property type="match status" value="2"/>
</dbReference>
<dbReference type="SUPFAM" id="SSF52540">
    <property type="entry name" value="P-loop containing nucleoside triphosphate hydrolases"/>
    <property type="match status" value="1"/>
</dbReference>
<dbReference type="PROSITE" id="PS00301">
    <property type="entry name" value="G_TR_1"/>
    <property type="match status" value="1"/>
</dbReference>
<dbReference type="PROSITE" id="PS51722">
    <property type="entry name" value="G_TR_2"/>
    <property type="match status" value="1"/>
</dbReference>
<protein>
    <recommendedName>
        <fullName evidence="1">Elongation factor 4</fullName>
        <shortName evidence="1">EF-4</shortName>
        <ecNumber evidence="1">3.6.5.n1</ecNumber>
    </recommendedName>
    <alternativeName>
        <fullName evidence="1">Ribosomal back-translocase LepA</fullName>
    </alternativeName>
</protein>
<keyword id="KW-1003">Cell membrane</keyword>
<keyword id="KW-0342">GTP-binding</keyword>
<keyword id="KW-0378">Hydrolase</keyword>
<keyword id="KW-0472">Membrane</keyword>
<keyword id="KW-0547">Nucleotide-binding</keyword>
<keyword id="KW-0648">Protein biosynthesis</keyword>
<gene>
    <name evidence="1" type="primary">lepA</name>
    <name type="ordered locus">BcerKBAB4_4170</name>
</gene>
<evidence type="ECO:0000255" key="1">
    <source>
        <dbReference type="HAMAP-Rule" id="MF_00071"/>
    </source>
</evidence>
<organism>
    <name type="scientific">Bacillus mycoides (strain KBAB4)</name>
    <name type="common">Bacillus weihenstephanensis</name>
    <dbReference type="NCBI Taxonomy" id="315730"/>
    <lineage>
        <taxon>Bacteria</taxon>
        <taxon>Bacillati</taxon>
        <taxon>Bacillota</taxon>
        <taxon>Bacilli</taxon>
        <taxon>Bacillales</taxon>
        <taxon>Bacillaceae</taxon>
        <taxon>Bacillus</taxon>
        <taxon>Bacillus cereus group</taxon>
    </lineage>
</organism>
<sequence length="607" mass="68023">MNKEERAKRQSKIRNFSIIAHIDHGKSTLADRILEKTNALAQREMKAQLLDSMELERERGITIKLNAVQLTYKAKDGEEYILHLIDTPGHVDFTYEVSRSLAACEGAILVVDAAQGIEAQTLANVYLALDNNLEILPVINKIDLPSADPERVRQEVEDVIGLDASEAVLASAKAGIGIEDILEQIVEKVPAPTGDSEEPLQCMIFDSLYDPYRGVIAYIRVVNGTVKVGDKVRMMATGKEFEVTEVGVFTPKTTQRDELTVGDVGFLAASIKNVGDTRVGDTITHAKRPAAEPLKGYRKLNPMVFCGLYPIDSARYNDLRDALEKLELNDSALEFEPETSQALGFGFRCGFLGLLHMEIIQERIEREFKIDLITTAPSVIYKVYLTNGEDFIVDNPSNMPDPQTIDRVEEPFVKAAIMVPNDYVGAVMEICQGKRGTFIDMQYLDETRVTLTYEIPLSEIVYDFFDQLKSNTKGYASFDYELIGYKPSKLVKMDILLNNEQVDALSFIVHRDSAYDRGKVIVEKLKKLIPRQQFEVPIQATIGNKVVSRSTIKAMRKNVLAKCYGGDISRKRKLLDKQKEGKKRMKSVGSVEVPQEAFMAVLKMDDN</sequence>
<comment type="function">
    <text evidence="1">Required for accurate and efficient protein synthesis under certain stress conditions. May act as a fidelity factor of the translation reaction, by catalyzing a one-codon backward translocation of tRNAs on improperly translocated ribosomes. Back-translocation proceeds from a post-translocation (POST) complex to a pre-translocation (PRE) complex, thus giving elongation factor G a second chance to translocate the tRNAs correctly. Binds to ribosomes in a GTP-dependent manner.</text>
</comment>
<comment type="catalytic activity">
    <reaction evidence="1">
        <text>GTP + H2O = GDP + phosphate + H(+)</text>
        <dbReference type="Rhea" id="RHEA:19669"/>
        <dbReference type="ChEBI" id="CHEBI:15377"/>
        <dbReference type="ChEBI" id="CHEBI:15378"/>
        <dbReference type="ChEBI" id="CHEBI:37565"/>
        <dbReference type="ChEBI" id="CHEBI:43474"/>
        <dbReference type="ChEBI" id="CHEBI:58189"/>
        <dbReference type="EC" id="3.6.5.n1"/>
    </reaction>
</comment>
<comment type="subcellular location">
    <subcellularLocation>
        <location evidence="1">Cell membrane</location>
        <topology evidence="1">Peripheral membrane protein</topology>
        <orientation evidence="1">Cytoplasmic side</orientation>
    </subcellularLocation>
</comment>
<comment type="similarity">
    <text evidence="1">Belongs to the TRAFAC class translation factor GTPase superfamily. Classic translation factor GTPase family. LepA subfamily.</text>
</comment>
<name>LEPA_BACMK</name>
<proteinExistence type="inferred from homology"/>
<reference key="1">
    <citation type="journal article" date="2008" name="Chem. Biol. Interact.">
        <title>Extending the Bacillus cereus group genomics to putative food-borne pathogens of different toxicity.</title>
        <authorList>
            <person name="Lapidus A."/>
            <person name="Goltsman E."/>
            <person name="Auger S."/>
            <person name="Galleron N."/>
            <person name="Segurens B."/>
            <person name="Dossat C."/>
            <person name="Land M.L."/>
            <person name="Broussolle V."/>
            <person name="Brillard J."/>
            <person name="Guinebretiere M.-H."/>
            <person name="Sanchis V."/>
            <person name="Nguen-the C."/>
            <person name="Lereclus D."/>
            <person name="Richardson P."/>
            <person name="Wincker P."/>
            <person name="Weissenbach J."/>
            <person name="Ehrlich S.D."/>
            <person name="Sorokin A."/>
        </authorList>
    </citation>
    <scope>NUCLEOTIDE SEQUENCE [LARGE SCALE GENOMIC DNA]</scope>
    <source>
        <strain>KBAB4</strain>
    </source>
</reference>